<protein>
    <recommendedName>
        <fullName evidence="1">3-deoxy-D-manno-octulosonic acid kinase</fullName>
        <shortName evidence="1">Kdo kinase</shortName>
        <ecNumber evidence="1">2.7.1.166</ecNumber>
    </recommendedName>
</protein>
<organism>
    <name type="scientific">Xylella fastidiosa (strain M12)</name>
    <dbReference type="NCBI Taxonomy" id="405440"/>
    <lineage>
        <taxon>Bacteria</taxon>
        <taxon>Pseudomonadati</taxon>
        <taxon>Pseudomonadota</taxon>
        <taxon>Gammaproteobacteria</taxon>
        <taxon>Lysobacterales</taxon>
        <taxon>Lysobacteraceae</taxon>
        <taxon>Xylella</taxon>
    </lineage>
</organism>
<name>KDKA_XYLFM</name>
<keyword id="KW-0067">ATP-binding</keyword>
<keyword id="KW-0997">Cell inner membrane</keyword>
<keyword id="KW-1003">Cell membrane</keyword>
<keyword id="KW-0418">Kinase</keyword>
<keyword id="KW-0448">Lipopolysaccharide biosynthesis</keyword>
<keyword id="KW-0472">Membrane</keyword>
<keyword id="KW-0547">Nucleotide-binding</keyword>
<keyword id="KW-0808">Transferase</keyword>
<gene>
    <name evidence="1" type="primary">kdkA</name>
    <name type="ordered locus">Xfasm12_1357</name>
</gene>
<reference key="1">
    <citation type="journal article" date="2010" name="J. Bacteriol.">
        <title>Whole genome sequences of two Xylella fastidiosa strains (M12 and M23) causing almond leaf scorch disease in California.</title>
        <authorList>
            <person name="Chen J."/>
            <person name="Xie G."/>
            <person name="Han S."/>
            <person name="Chertkov O."/>
            <person name="Sims D."/>
            <person name="Civerolo E.L."/>
        </authorList>
    </citation>
    <scope>NUCLEOTIDE SEQUENCE [LARGE SCALE GENOMIC DNA]</scope>
    <source>
        <strain>M12</strain>
    </source>
</reference>
<accession>B0U358</accession>
<feature type="chain" id="PRO_1000127648" description="3-deoxy-D-manno-octulosonic acid kinase">
    <location>
        <begin position="1"/>
        <end position="249"/>
    </location>
</feature>
<feature type="active site" evidence="1">
    <location>
        <position position="175"/>
    </location>
</feature>
<comment type="function">
    <text evidence="1">Catalyzes the ATP-dependent phosphorylation of the 3-deoxy-D-manno-octulosonic acid (Kdo) residue in Kdo-lipid IV(A) at the 4-OH position.</text>
</comment>
<comment type="catalytic activity">
    <reaction evidence="1">
        <text>an alpha-Kdo-(2-&gt;6)-lipid IVA + ATP = a 4-O-phospho-alpha-Kdo-(2-&gt;6)-lipid IVA + ADP + H(+)</text>
        <dbReference type="Rhea" id="RHEA:74271"/>
        <dbReference type="ChEBI" id="CHEBI:15378"/>
        <dbReference type="ChEBI" id="CHEBI:30616"/>
        <dbReference type="ChEBI" id="CHEBI:176428"/>
        <dbReference type="ChEBI" id="CHEBI:193140"/>
        <dbReference type="ChEBI" id="CHEBI:456216"/>
        <dbReference type="EC" id="2.7.1.166"/>
    </reaction>
</comment>
<comment type="pathway">
    <text evidence="1">Bacterial outer membrane biogenesis; LPS core biosynthesis.</text>
</comment>
<comment type="subcellular location">
    <subcellularLocation>
        <location evidence="1">Cell inner membrane</location>
        <topology evidence="1">Peripheral membrane protein</topology>
        <orientation evidence="1">Cytoplasmic side</orientation>
    </subcellularLocation>
</comment>
<comment type="similarity">
    <text evidence="1">Belongs to the protein kinase superfamily. KdkA/RfaP family.</text>
</comment>
<sequence>MVAFDANEILTPFCEGHREGAILFDCQRMRQVEYGLFVPAWWGERAHPVSEGGRGSAWFVEASFGNAVLRQYRRGGMIAMLNRDRYFWCGGHRTRSVLEFRLMRELISRGLPVPTPLAACYVRYGVQYRAAILIERLEGVSSLAMCIRGNSKETHWEQIGRMISRFHREGLDHADLNAHNILLDPAGQCWLIDFDRGALRIPATKWRERNLARLLRSLLKIRGERSVDAVYRDFERLRRAYDLAWSRGC</sequence>
<evidence type="ECO:0000255" key="1">
    <source>
        <dbReference type="HAMAP-Rule" id="MF_00521"/>
    </source>
</evidence>
<proteinExistence type="inferred from homology"/>
<dbReference type="EC" id="2.7.1.166" evidence="1"/>
<dbReference type="EMBL" id="CP000941">
    <property type="protein sequence ID" value="ACA12287.1"/>
    <property type="molecule type" value="Genomic_DNA"/>
</dbReference>
<dbReference type="RefSeq" id="WP_012337922.1">
    <property type="nucleotide sequence ID" value="NC_010513.1"/>
</dbReference>
<dbReference type="KEGG" id="xfm:Xfasm12_1357"/>
<dbReference type="HOGENOM" id="CLU_094226_0_0_6"/>
<dbReference type="UniPathway" id="UPA00958"/>
<dbReference type="GO" id="GO:0005886">
    <property type="term" value="C:plasma membrane"/>
    <property type="evidence" value="ECO:0007669"/>
    <property type="project" value="UniProtKB-SubCell"/>
</dbReference>
<dbReference type="GO" id="GO:0005524">
    <property type="term" value="F:ATP binding"/>
    <property type="evidence" value="ECO:0007669"/>
    <property type="project" value="UniProtKB-UniRule"/>
</dbReference>
<dbReference type="GO" id="GO:0016301">
    <property type="term" value="F:kinase activity"/>
    <property type="evidence" value="ECO:0007669"/>
    <property type="project" value="UniProtKB-KW"/>
</dbReference>
<dbReference type="GO" id="GO:0016773">
    <property type="term" value="F:phosphotransferase activity, alcohol group as acceptor"/>
    <property type="evidence" value="ECO:0007669"/>
    <property type="project" value="UniProtKB-UniRule"/>
</dbReference>
<dbReference type="GO" id="GO:0009244">
    <property type="term" value="P:lipopolysaccharide core region biosynthetic process"/>
    <property type="evidence" value="ECO:0007669"/>
    <property type="project" value="UniProtKB-UniRule"/>
</dbReference>
<dbReference type="Gene3D" id="1.10.510.10">
    <property type="entry name" value="Transferase(Phosphotransferase) domain 1"/>
    <property type="match status" value="1"/>
</dbReference>
<dbReference type="HAMAP" id="MF_00521">
    <property type="entry name" value="KDO_kinase"/>
    <property type="match status" value="1"/>
</dbReference>
<dbReference type="InterPro" id="IPR022826">
    <property type="entry name" value="KDO_kinase"/>
</dbReference>
<dbReference type="InterPro" id="IPR011009">
    <property type="entry name" value="Kinase-like_dom_sf"/>
</dbReference>
<dbReference type="NCBIfam" id="NF002475">
    <property type="entry name" value="PRK01723.1"/>
    <property type="match status" value="1"/>
</dbReference>
<dbReference type="Pfam" id="PF06293">
    <property type="entry name" value="Kdo"/>
    <property type="match status" value="1"/>
</dbReference>
<dbReference type="SUPFAM" id="SSF56112">
    <property type="entry name" value="Protein kinase-like (PK-like)"/>
    <property type="match status" value="1"/>
</dbReference>